<name>ATH1_CANGB</name>
<evidence type="ECO:0000250" key="1">
    <source>
        <dbReference type="UniProtKB" id="D6XZ22"/>
    </source>
</evidence>
<evidence type="ECO:0000250" key="2">
    <source>
        <dbReference type="UniProtKB" id="P48016"/>
    </source>
</evidence>
<evidence type="ECO:0000255" key="3"/>
<evidence type="ECO:0000255" key="4">
    <source>
        <dbReference type="PROSITE-ProRule" id="PRU00498"/>
    </source>
</evidence>
<evidence type="ECO:0000269" key="5">
    <source>
    </source>
</evidence>
<evidence type="ECO:0000269" key="6">
    <source>
    </source>
</evidence>
<evidence type="ECO:0000303" key="7">
    <source>
    </source>
</evidence>
<evidence type="ECO:0000303" key="8">
    <source>
    </source>
</evidence>
<evidence type="ECO:0000305" key="9"/>
<evidence type="ECO:0000305" key="10">
    <source>
    </source>
</evidence>
<evidence type="ECO:0000305" key="11">
    <source>
    </source>
</evidence>
<evidence type="ECO:0000312" key="12">
    <source>
        <dbReference type="EMBL" id="AGG12634.1"/>
    </source>
</evidence>
<reference evidence="12" key="1">
    <citation type="journal article" date="2015" name="Microbiol. Res.">
        <title>Secretion of the acid trehalase encoded by the CgATH1 gene allows trehalose fermentation by Candida glabrata.</title>
        <authorList>
            <person name="Zilli D.M."/>
            <person name="Lopes R.G."/>
            <person name="Alves S.L. Jr."/>
            <person name="Barros L.M."/>
            <person name="Miletti L.C."/>
            <person name="Stambuk B.U."/>
        </authorList>
    </citation>
    <scope>NUCLEOTIDE SEQUENCE [GENOMIC DNA]</scope>
    <scope>FUNCTION</scope>
    <scope>CATALYTIC ACTIVITY</scope>
    <scope>SUBUNIT</scope>
    <scope>SUBCELLULAR LOCATION</scope>
    <source>
        <strain evidence="12">Bg14</strain>
    </source>
</reference>
<reference evidence="9" key="2">
    <citation type="journal article" date="2020" name="Mem. Inst. Oswaldo Cruz">
        <title>The secreted acid trehalase encoded by the CgATH1 gene is involved in Candida glabrata virulence.</title>
        <authorList>
            <person name="Lopes R.G."/>
            <person name="Munoz J.E."/>
            <person name="Barros L.M."/>
            <person name="Alves-Jr S.L."/>
            <person name="Taborda C.P."/>
            <person name="Stambuk B.U."/>
        </authorList>
    </citation>
    <scope>FUNCTION</scope>
    <scope>CATALYTIC ACTIVITY</scope>
    <scope>SUBCELLULAR LOCATION</scope>
    <scope>DISRUPTION PHENOTYPE</scope>
    <source>
        <strain evidence="8">Bg14</strain>
    </source>
</reference>
<dbReference type="EC" id="3.2.1.28" evidence="10 11"/>
<dbReference type="EMBL" id="KC208027">
    <property type="protein sequence ID" value="AGG12634.1"/>
    <property type="molecule type" value="Genomic_DNA"/>
</dbReference>
<dbReference type="SMR" id="M1RNJ8"/>
<dbReference type="GlyCosmos" id="M1RNJ8">
    <property type="glycosylation" value="22 sites, No reported glycans"/>
</dbReference>
<dbReference type="VEuPathDB" id="FungiDB:B1J91_K05137g"/>
<dbReference type="VEuPathDB" id="FungiDB:CAGL0K05137g"/>
<dbReference type="VEuPathDB" id="FungiDB:GVI51_K04983"/>
<dbReference type="VEuPathDB" id="FungiDB:GWK60_K04983"/>
<dbReference type="GO" id="GO:0030287">
    <property type="term" value="C:cell wall-bounded periplasmic space"/>
    <property type="evidence" value="ECO:0007669"/>
    <property type="project" value="EnsemblFungi"/>
</dbReference>
<dbReference type="GO" id="GO:0005576">
    <property type="term" value="C:extracellular region"/>
    <property type="evidence" value="ECO:0000314"/>
    <property type="project" value="UniProtKB"/>
</dbReference>
<dbReference type="GO" id="GO:0009277">
    <property type="term" value="C:fungal-type cell wall"/>
    <property type="evidence" value="ECO:0007669"/>
    <property type="project" value="EnsemblFungi"/>
</dbReference>
<dbReference type="GO" id="GO:0000328">
    <property type="term" value="C:fungal-type vacuole lumen"/>
    <property type="evidence" value="ECO:0007669"/>
    <property type="project" value="EnsemblFungi"/>
</dbReference>
<dbReference type="GO" id="GO:0016020">
    <property type="term" value="C:membrane"/>
    <property type="evidence" value="ECO:0007669"/>
    <property type="project" value="UniProtKB-SubCell"/>
</dbReference>
<dbReference type="GO" id="GO:0042597">
    <property type="term" value="C:periplasmic space"/>
    <property type="evidence" value="ECO:0000314"/>
    <property type="project" value="UniProtKB"/>
</dbReference>
<dbReference type="GO" id="GO:0004555">
    <property type="term" value="F:alpha,alpha-trehalase activity"/>
    <property type="evidence" value="ECO:0000314"/>
    <property type="project" value="UniProtKB"/>
</dbReference>
<dbReference type="GO" id="GO:0030246">
    <property type="term" value="F:carbohydrate binding"/>
    <property type="evidence" value="ECO:0007669"/>
    <property type="project" value="InterPro"/>
</dbReference>
<dbReference type="GO" id="GO:0015976">
    <property type="term" value="P:carbon utilization"/>
    <property type="evidence" value="ECO:0000314"/>
    <property type="project" value="UniProtKB"/>
</dbReference>
<dbReference type="GO" id="GO:0005993">
    <property type="term" value="P:trehalose catabolic process"/>
    <property type="evidence" value="ECO:0000314"/>
    <property type="project" value="UniProtKB"/>
</dbReference>
<dbReference type="GO" id="GO:0015771">
    <property type="term" value="P:trehalose transport"/>
    <property type="evidence" value="ECO:0007669"/>
    <property type="project" value="EnsemblFungi"/>
</dbReference>
<dbReference type="FunFam" id="1.50.10.10:FF:000032">
    <property type="entry name" value="Vacuolar acid trehalase"/>
    <property type="match status" value="1"/>
</dbReference>
<dbReference type="Gene3D" id="1.50.10.10">
    <property type="match status" value="1"/>
</dbReference>
<dbReference type="Gene3D" id="2.70.98.40">
    <property type="entry name" value="Glycoside hydrolase, family 65, N-terminal domain"/>
    <property type="match status" value="1"/>
</dbReference>
<dbReference type="InterPro" id="IPR008928">
    <property type="entry name" value="6-hairpin_glycosidase_sf"/>
</dbReference>
<dbReference type="InterPro" id="IPR012341">
    <property type="entry name" value="6hp_glycosidase-like_sf"/>
</dbReference>
<dbReference type="InterPro" id="IPR011013">
    <property type="entry name" value="Gal_mutarotase_sf_dom"/>
</dbReference>
<dbReference type="InterPro" id="IPR005194">
    <property type="entry name" value="Glyco_hydro_65_C"/>
</dbReference>
<dbReference type="InterPro" id="IPR005195">
    <property type="entry name" value="Glyco_hydro_65_M"/>
</dbReference>
<dbReference type="InterPro" id="IPR005196">
    <property type="entry name" value="Glyco_hydro_65_N"/>
</dbReference>
<dbReference type="InterPro" id="IPR037018">
    <property type="entry name" value="Glyco_hydro_65_N_sf"/>
</dbReference>
<dbReference type="PANTHER" id="PTHR11051">
    <property type="entry name" value="GLYCOSYL HYDROLASE-RELATED"/>
    <property type="match status" value="1"/>
</dbReference>
<dbReference type="PANTHER" id="PTHR11051:SF8">
    <property type="entry name" value="PROTEIN-GLUCOSYLGALACTOSYLHYDROXYLYSINE GLUCOSIDASE"/>
    <property type="match status" value="1"/>
</dbReference>
<dbReference type="Pfam" id="PF03633">
    <property type="entry name" value="Glyco_hydro_65C"/>
    <property type="match status" value="1"/>
</dbReference>
<dbReference type="Pfam" id="PF03632">
    <property type="entry name" value="Glyco_hydro_65m"/>
    <property type="match status" value="1"/>
</dbReference>
<dbReference type="Pfam" id="PF03636">
    <property type="entry name" value="Glyco_hydro_65N"/>
    <property type="match status" value="1"/>
</dbReference>
<dbReference type="SUPFAM" id="SSF74650">
    <property type="entry name" value="Galactose mutarotase-like"/>
    <property type="match status" value="1"/>
</dbReference>
<dbReference type="SUPFAM" id="SSF48208">
    <property type="entry name" value="Six-hairpin glycosidases"/>
    <property type="match status" value="1"/>
</dbReference>
<proteinExistence type="evidence at protein level"/>
<feature type="chain" id="PRO_0000452329" description="Periplasmic/secreted acid trehalase ATH1">
    <location>
        <begin position="1"/>
        <end position="1212"/>
    </location>
</feature>
<feature type="topological domain" description="Cytoplasmic" evidence="9">
    <location>
        <begin position="1"/>
        <end position="82"/>
    </location>
</feature>
<feature type="transmembrane region" description="Helical" evidence="3">
    <location>
        <begin position="83"/>
        <end position="103"/>
    </location>
</feature>
<feature type="topological domain" description="Periplasmic" evidence="9">
    <location>
        <begin position="104"/>
        <end position="1212"/>
    </location>
</feature>
<feature type="active site" description="Proton donor" evidence="1">
    <location>
        <position position="677"/>
    </location>
</feature>
<feature type="binding site" evidence="1">
    <location>
        <begin position="546"/>
        <end position="547"/>
    </location>
    <ligand>
        <name>substrate</name>
    </ligand>
</feature>
<feature type="binding site" evidence="1">
    <location>
        <begin position="744"/>
        <end position="745"/>
    </location>
    <ligand>
        <name>substrate</name>
    </ligand>
</feature>
<feature type="glycosylation site" description="N-linked (GlcNAc...) asparagine" evidence="4">
    <location>
        <position position="243"/>
    </location>
</feature>
<feature type="glycosylation site" description="N-linked (GlcNAc...) asparagine" evidence="4">
    <location>
        <position position="275"/>
    </location>
</feature>
<feature type="glycosylation site" description="N-linked (GlcNAc...) asparagine" evidence="4">
    <location>
        <position position="296"/>
    </location>
</feature>
<feature type="glycosylation site" description="N-linked (GlcNAc...) asparagine" evidence="4">
    <location>
        <position position="362"/>
    </location>
</feature>
<feature type="glycosylation site" description="N-linked (GlcNAc...) asparagine" evidence="4">
    <location>
        <position position="414"/>
    </location>
</feature>
<feature type="glycosylation site" description="N-linked (GlcNAc...) asparagine" evidence="4">
    <location>
        <position position="428"/>
    </location>
</feature>
<feature type="glycosylation site" description="N-linked (GlcNAc...) asparagine" evidence="4">
    <location>
        <position position="521"/>
    </location>
</feature>
<feature type="glycosylation site" description="N-linked (GlcNAc...) asparagine" evidence="4">
    <location>
        <position position="572"/>
    </location>
</feature>
<feature type="glycosylation site" description="N-linked (GlcNAc...) asparagine" evidence="4">
    <location>
        <position position="601"/>
    </location>
</feature>
<feature type="glycosylation site" description="N-linked (GlcNAc...) asparagine" evidence="4">
    <location>
        <position position="661"/>
    </location>
</feature>
<feature type="glycosylation site" description="N-linked (GlcNAc...) asparagine" evidence="4">
    <location>
        <position position="671"/>
    </location>
</feature>
<feature type="glycosylation site" description="N-linked (GlcNAc...) asparagine" evidence="4">
    <location>
        <position position="729"/>
    </location>
</feature>
<feature type="glycosylation site" description="N-linked (GlcNAc...) asparagine" evidence="4">
    <location>
        <position position="738"/>
    </location>
</feature>
<feature type="glycosylation site" description="N-linked (GlcNAc...) asparagine" evidence="4">
    <location>
        <position position="912"/>
    </location>
</feature>
<feature type="glycosylation site" description="N-linked (GlcNAc...) asparagine" evidence="4">
    <location>
        <position position="938"/>
    </location>
</feature>
<feature type="glycosylation site" description="N-linked (GlcNAc...) asparagine" evidence="4">
    <location>
        <position position="993"/>
    </location>
</feature>
<feature type="glycosylation site" description="N-linked (GlcNAc...) asparagine" evidence="4">
    <location>
        <position position="1011"/>
    </location>
</feature>
<feature type="glycosylation site" description="N-linked (GlcNAc...) asparagine" evidence="4">
    <location>
        <position position="1033"/>
    </location>
</feature>
<feature type="glycosylation site" description="N-linked (GlcNAc...) asparagine" evidence="4">
    <location>
        <position position="1052"/>
    </location>
</feature>
<feature type="glycosylation site" description="N-linked (GlcNAc...) asparagine" evidence="4">
    <location>
        <position position="1070"/>
    </location>
</feature>
<feature type="glycosylation site" description="N-linked (GlcNAc...) asparagine" evidence="4">
    <location>
        <position position="1097"/>
    </location>
</feature>
<feature type="glycosylation site" description="N-linked (GlcNAc...) asparagine" evidence="4">
    <location>
        <position position="1165"/>
    </location>
</feature>
<sequence>MGFKDKILFWKDEVQYRTLAVADQVANRFLHSFENVYQGDESVEDADSRPVGLTNETLSHSSDFFVLPEERISTRVKIRRQNILNTTLILGMLIALVIWTAILSTNSYFSSSLASASPLFNKEGRVVRPMRESNLGLHADPQTRKSSKTLYDLLSDFDNAFYDDENMILGSLAFGENTYSRQPYVANGYIGSRIPNIGFGYALDTLNLYADAPGALNNGWPLRNRRFAGSFVSDFYSLQAKLNSTNFPELDEKGYTTVISSIPEWTDLQFTVDLNGTKWFNPQSVLIDDVINYNQNLSMKDGIVSTNMDWLNGMINIKSEVWAHRKIHSLGITRLEISLNLDALPDEFTELPVTVYDIIDLNTSHRTTLYEKGQDEDNKAIYMIVNPDNVPYSNAVVYSTCTIKGTENNFSPYNFTSDDRIARNYMTNLTEENPKVVIYKYTSVVSSEYNNDEPNPNVNLKFASNIANTAKGNYKSLLSNHKRAWYDLYNDAFIEIPSDSLLEMTARSSLFHLLANTRQYNVSTTRGLPVGVGGLSSDSYGGMVFWDADVWMAPALLPFFPNIAMNMNNYRNATHQQAIENAKQYNYPGAVYPWTSGRYANCTSTGPCIDYEYHINVDIALASFSIYMNGAEGADEDYLRFTTWPMVKDAAVFFKAYVKYNETLGEYETYNLTDPDEFANHVNNGAFTNAGIKTLLKWATDIGTHLGEEVDPKWMEIADNIHIPRSDSNITLEYSGMNSSVEIKQADVTLMVYPLGYINDESILNNAIKDLYYYSERQSASGPAMTYPVFVAAAASLLNHGSSSQSYLYKSVLPYLRSPFAQFSEQSDDNFLTNGLTQPAFPFLTANGGFLQSILFGLTGLRYSYEVTPRTKKISRLLKFDPVKLPLLPGGIAIRNFKYMGQVLDIIIDDNNGTIAHKGGDKPIRIKVPNRDILHDRNITSALYSKRDDDLSATDDYYGTYFTLYPNEELVIPLYDTKLNIDGNIAESKQITNLTAGVPGDVGFSALDGNNYTHWQPFDKSDNAKLLIDLGFNSTHVIKKGIILWGQRPAKNISLSVLPHSERIEQLFANITDLLETSSITKGGLPLNQMLGQTQSNVTAEIDDDILALLNWKGDDLDQLIPYLPDMHLLQEKFIPILKDYPIKPNQRYYEEIIDDDIIKLLPSNTTEFTIDYNSIPGGEKRARYVVLTVHGTYDDDDDLKGATIREIVLQE</sequence>
<gene>
    <name evidence="7" type="primary">ATH1</name>
</gene>
<organism evidence="12">
    <name type="scientific">Candida glabrata</name>
    <name type="common">Yeast</name>
    <name type="synonym">Torulopsis glabrata</name>
    <dbReference type="NCBI Taxonomy" id="5478"/>
    <lineage>
        <taxon>Eukaryota</taxon>
        <taxon>Fungi</taxon>
        <taxon>Dikarya</taxon>
        <taxon>Ascomycota</taxon>
        <taxon>Saccharomycotina</taxon>
        <taxon>Saccharomycetes</taxon>
        <taxon>Saccharomycetales</taxon>
        <taxon>Saccharomycetaceae</taxon>
        <taxon>Nakaseomyces</taxon>
    </lineage>
</organism>
<protein>
    <recommendedName>
        <fullName evidence="9">Periplasmic/secreted acid trehalase ATH1</fullName>
        <shortName evidence="7">cgATH1</shortName>
        <ecNumber evidence="10 11">3.2.1.28</ecNumber>
    </recommendedName>
</protein>
<keyword id="KW-0325">Glycoprotein</keyword>
<keyword id="KW-0326">Glycosidase</keyword>
<keyword id="KW-0378">Hydrolase</keyword>
<keyword id="KW-0472">Membrane</keyword>
<keyword id="KW-0574">Periplasm</keyword>
<keyword id="KW-0964">Secreted</keyword>
<keyword id="KW-0735">Signal-anchor</keyword>
<keyword id="KW-0812">Transmembrane</keyword>
<keyword id="KW-1133">Transmembrane helix</keyword>
<accession>M1RNJ8</accession>
<comment type="function">
    <text evidence="5 6">Periplasmic/secreted acid trehalase that catalyzes hydrolysis of the disaccharide trehalose and required for growth on trehalose as carbon source (PubMed:26411890, PubMed:33146242). Growth on trehalose is not restricted to respiration (PubMed:26411890).</text>
</comment>
<comment type="catalytic activity">
    <reaction evidence="10 11">
        <text>alpha,alpha-trehalose + H2O = alpha-D-glucose + beta-D-glucose</text>
        <dbReference type="Rhea" id="RHEA:32675"/>
        <dbReference type="ChEBI" id="CHEBI:15377"/>
        <dbReference type="ChEBI" id="CHEBI:15903"/>
        <dbReference type="ChEBI" id="CHEBI:16551"/>
        <dbReference type="ChEBI" id="CHEBI:17925"/>
        <dbReference type="EC" id="3.2.1.28"/>
    </reaction>
</comment>
<comment type="subunit">
    <text evidence="5">Homodimer.</text>
</comment>
<comment type="subcellular location">
    <subcellularLocation>
        <location evidence="5 6">Secreted</location>
    </subcellularLocation>
    <subcellularLocation>
        <location evidence="5 6">Periplasm</location>
    </subcellularLocation>
    <subcellularLocation>
        <location evidence="2">Membrane</location>
        <topology evidence="2">Single-pass type II membrane protein</topology>
    </subcellularLocation>
</comment>
<comment type="disruption phenotype">
    <text evidence="6">Abolishes growth in trehalose carbon source (PubMed:33146242). Normal growth in glucose carbon source (PubMed:33146242). Decreases virulence in a mouse infection model (PubMed:33146242).</text>
</comment>
<comment type="similarity">
    <text evidence="9">Belongs to the glycosyl hydrolase 65 family.</text>
</comment>